<accession>Q75D30</accession>
<feature type="chain" id="PRO_0000087027" description="Phosphatidylinositol N-acetylglucosaminyltransferase ERI1 subunit">
    <location>
        <begin position="1"/>
        <end position="71"/>
    </location>
</feature>
<feature type="transmembrane region" description="Helical" evidence="2">
    <location>
        <begin position="5"/>
        <end position="25"/>
    </location>
</feature>
<feature type="transmembrane region" description="Helical" evidence="2">
    <location>
        <begin position="35"/>
        <end position="55"/>
    </location>
</feature>
<protein>
    <recommendedName>
        <fullName>Phosphatidylinositol N-acetylglucosaminyltransferase ERI1 subunit</fullName>
    </recommendedName>
    <alternativeName>
        <fullName>Endoplasmic reticulum-associated Ras inhibitor protein 1</fullName>
    </alternativeName>
</protein>
<gene>
    <name type="primary">ERI1</name>
    <name type="ordered locus">ABR192C-A</name>
</gene>
<sequence>MNDKVAATLVLVVTYSIVGASLWCLTYAWHDETKLYYWCIVQLLPVMLWVWCVISWCGAQLFGYAKRGKAD</sequence>
<name>ERI1_EREGS</name>
<organism>
    <name type="scientific">Eremothecium gossypii (strain ATCC 10895 / CBS 109.51 / FGSC 9923 / NRRL Y-1056)</name>
    <name type="common">Yeast</name>
    <name type="synonym">Ashbya gossypii</name>
    <dbReference type="NCBI Taxonomy" id="284811"/>
    <lineage>
        <taxon>Eukaryota</taxon>
        <taxon>Fungi</taxon>
        <taxon>Dikarya</taxon>
        <taxon>Ascomycota</taxon>
        <taxon>Saccharomycotina</taxon>
        <taxon>Saccharomycetes</taxon>
        <taxon>Saccharomycetales</taxon>
        <taxon>Saccharomycetaceae</taxon>
        <taxon>Eremothecium</taxon>
    </lineage>
</organism>
<proteinExistence type="inferred from homology"/>
<evidence type="ECO:0000250" key="1"/>
<evidence type="ECO:0000255" key="2"/>
<keyword id="KW-0256">Endoplasmic reticulum</keyword>
<keyword id="KW-0337">GPI-anchor biosynthesis</keyword>
<keyword id="KW-0472">Membrane</keyword>
<keyword id="KW-1185">Reference proteome</keyword>
<keyword id="KW-0812">Transmembrane</keyword>
<keyword id="KW-1133">Transmembrane helix</keyword>
<reference key="1">
    <citation type="journal article" date="2004" name="Science">
        <title>The Ashbya gossypii genome as a tool for mapping the ancient Saccharomyces cerevisiae genome.</title>
        <authorList>
            <person name="Dietrich F.S."/>
            <person name="Voegeli S."/>
            <person name="Brachat S."/>
            <person name="Lerch A."/>
            <person name="Gates K."/>
            <person name="Steiner S."/>
            <person name="Mohr C."/>
            <person name="Poehlmann R."/>
            <person name="Luedi P."/>
            <person name="Choi S."/>
            <person name="Wing R.A."/>
            <person name="Flavier A."/>
            <person name="Gaffney T.D."/>
            <person name="Philippsen P."/>
        </authorList>
    </citation>
    <scope>NUCLEOTIDE SEQUENCE [LARGE SCALE GENOMIC DNA]</scope>
    <source>
        <strain>ATCC 10895 / CBS 109.51 / FGSC 9923 / NRRL Y-1056</strain>
    </source>
</reference>
<reference key="2">
    <citation type="journal article" date="2013" name="G3 (Bethesda)">
        <title>Genomes of Ashbya fungi isolated from insects reveal four mating-type loci, numerous translocations, lack of transposons, and distinct gene duplications.</title>
        <authorList>
            <person name="Dietrich F.S."/>
            <person name="Voegeli S."/>
            <person name="Kuo S."/>
            <person name="Philippsen P."/>
        </authorList>
    </citation>
    <scope>GENOME REANNOTATION</scope>
    <source>
        <strain>ATCC 10895 / CBS 109.51 / FGSC 9923 / NRRL Y-1056</strain>
    </source>
</reference>
<dbReference type="EMBL" id="AE016815">
    <property type="protein sequence ID" value="AAS50965.1"/>
    <property type="molecule type" value="Genomic_DNA"/>
</dbReference>
<dbReference type="RefSeq" id="NP_983141.1">
    <property type="nucleotide sequence ID" value="NM_208494.1"/>
</dbReference>
<dbReference type="FunCoup" id="Q75D30">
    <property type="interactions" value="24"/>
</dbReference>
<dbReference type="STRING" id="284811.Q75D30"/>
<dbReference type="EnsemblFungi" id="AAS50965">
    <property type="protein sequence ID" value="AAS50965"/>
    <property type="gene ID" value="AGOS_ABR192CA"/>
</dbReference>
<dbReference type="GeneID" id="4619251"/>
<dbReference type="KEGG" id="ago:AGOS_ABR192CA"/>
<dbReference type="HOGENOM" id="CLU_190860_0_0_1"/>
<dbReference type="InParanoid" id="Q75D30"/>
<dbReference type="OrthoDB" id="4035846at2759"/>
<dbReference type="UniPathway" id="UPA00196"/>
<dbReference type="Proteomes" id="UP000000591">
    <property type="component" value="Chromosome II"/>
</dbReference>
<dbReference type="GO" id="GO:0005789">
    <property type="term" value="C:endoplasmic reticulum membrane"/>
    <property type="evidence" value="ECO:0007669"/>
    <property type="project" value="UniProtKB-SubCell"/>
</dbReference>
<dbReference type="GO" id="GO:0006506">
    <property type="term" value="P:GPI anchor biosynthetic process"/>
    <property type="evidence" value="ECO:0007669"/>
    <property type="project" value="UniProtKB-UniPathway"/>
</dbReference>
<dbReference type="InterPro" id="IPR029164">
    <property type="entry name" value="PIG-Y"/>
</dbReference>
<dbReference type="Pfam" id="PF15159">
    <property type="entry name" value="PIG-Y"/>
    <property type="match status" value="1"/>
</dbReference>
<comment type="function">
    <text evidence="1">Probable component of the GPI-GlcNAc transferase (GPI-GnT) complex in the endoplasmic reticulum, a complex that catalyzes transfer of GlcNAc from UDP-GlcNAc to an acceptor phosphatidylinositol, the first step in the production of GPI-anchors for cell surface proteins.</text>
</comment>
<comment type="pathway">
    <text>Glycolipid biosynthesis; glycosylphosphatidylinositol-anchor biosynthesis.</text>
</comment>
<comment type="subunit">
    <text evidence="1">Interacts with GPI2, suggesting that it is a component of the GPI-GnT complex, probably composed of GPI1, GPI2, GPI3, GPI15, and ERI1.</text>
</comment>
<comment type="subcellular location">
    <subcellularLocation>
        <location evidence="1">Endoplasmic reticulum membrane</location>
        <topology evidence="1">Multi-pass membrane protein</topology>
    </subcellularLocation>
</comment>